<proteinExistence type="inferred from homology"/>
<accession>Q7VRT2</accession>
<protein>
    <recommendedName>
        <fullName evidence="1">Succinyl-diaminopimelate desuccinylase</fullName>
        <shortName evidence="1">SDAP desuccinylase</shortName>
        <ecNumber evidence="1">3.5.1.18</ecNumber>
    </recommendedName>
    <alternativeName>
        <fullName evidence="1">N-succinyl-LL-2,6-diaminoheptanedioate amidohydrolase</fullName>
    </alternativeName>
</protein>
<name>DAPE_BLOFL</name>
<feature type="chain" id="PRO_0000375474" description="Succinyl-diaminopimelate desuccinylase">
    <location>
        <begin position="1"/>
        <end position="384"/>
    </location>
</feature>
<feature type="active site" evidence="1">
    <location>
        <position position="73"/>
    </location>
</feature>
<feature type="active site" description="Proton acceptor" evidence="1">
    <location>
        <position position="138"/>
    </location>
</feature>
<feature type="binding site" evidence="1">
    <location>
        <position position="71"/>
    </location>
    <ligand>
        <name>Zn(2+)</name>
        <dbReference type="ChEBI" id="CHEBI:29105"/>
        <label>1</label>
    </ligand>
</feature>
<feature type="binding site" evidence="1">
    <location>
        <position position="104"/>
    </location>
    <ligand>
        <name>Zn(2+)</name>
        <dbReference type="ChEBI" id="CHEBI:29105"/>
        <label>1</label>
    </ligand>
</feature>
<feature type="binding site" evidence="1">
    <location>
        <position position="104"/>
    </location>
    <ligand>
        <name>Zn(2+)</name>
        <dbReference type="ChEBI" id="CHEBI:29105"/>
        <label>2</label>
    </ligand>
</feature>
<feature type="binding site" evidence="1">
    <location>
        <position position="139"/>
    </location>
    <ligand>
        <name>Zn(2+)</name>
        <dbReference type="ChEBI" id="CHEBI:29105"/>
        <label>2</label>
    </ligand>
</feature>
<feature type="binding site" evidence="1">
    <location>
        <position position="167"/>
    </location>
    <ligand>
        <name>Zn(2+)</name>
        <dbReference type="ChEBI" id="CHEBI:29105"/>
        <label>1</label>
    </ligand>
</feature>
<feature type="binding site" evidence="1">
    <location>
        <position position="357"/>
    </location>
    <ligand>
        <name>Zn(2+)</name>
        <dbReference type="ChEBI" id="CHEBI:29105"/>
        <label>2</label>
    </ligand>
</feature>
<dbReference type="EC" id="3.5.1.18" evidence="1"/>
<dbReference type="EMBL" id="BX248583">
    <property type="protein sequence ID" value="CAD83203.1"/>
    <property type="molecule type" value="Genomic_DNA"/>
</dbReference>
<dbReference type="SMR" id="Q7VRT2"/>
<dbReference type="STRING" id="203907.Bfl517"/>
<dbReference type="KEGG" id="bfl:Bfl517"/>
<dbReference type="eggNOG" id="COG0624">
    <property type="taxonomic scope" value="Bacteria"/>
</dbReference>
<dbReference type="HOGENOM" id="CLU_021802_4_0_6"/>
<dbReference type="OrthoDB" id="9809784at2"/>
<dbReference type="UniPathway" id="UPA00034">
    <property type="reaction ID" value="UER00021"/>
</dbReference>
<dbReference type="Proteomes" id="UP000002192">
    <property type="component" value="Chromosome"/>
</dbReference>
<dbReference type="GO" id="GO:0008777">
    <property type="term" value="F:acetylornithine deacetylase activity"/>
    <property type="evidence" value="ECO:0007669"/>
    <property type="project" value="TreeGrafter"/>
</dbReference>
<dbReference type="GO" id="GO:0050897">
    <property type="term" value="F:cobalt ion binding"/>
    <property type="evidence" value="ECO:0007669"/>
    <property type="project" value="UniProtKB-UniRule"/>
</dbReference>
<dbReference type="GO" id="GO:0009014">
    <property type="term" value="F:succinyl-diaminopimelate desuccinylase activity"/>
    <property type="evidence" value="ECO:0007669"/>
    <property type="project" value="UniProtKB-UniRule"/>
</dbReference>
<dbReference type="GO" id="GO:0008270">
    <property type="term" value="F:zinc ion binding"/>
    <property type="evidence" value="ECO:0007669"/>
    <property type="project" value="UniProtKB-UniRule"/>
</dbReference>
<dbReference type="GO" id="GO:0019877">
    <property type="term" value="P:diaminopimelate biosynthetic process"/>
    <property type="evidence" value="ECO:0007669"/>
    <property type="project" value="UniProtKB-UniRule"/>
</dbReference>
<dbReference type="GO" id="GO:0006526">
    <property type="term" value="P:L-arginine biosynthetic process"/>
    <property type="evidence" value="ECO:0007669"/>
    <property type="project" value="TreeGrafter"/>
</dbReference>
<dbReference type="GO" id="GO:0009089">
    <property type="term" value="P:lysine biosynthetic process via diaminopimelate"/>
    <property type="evidence" value="ECO:0007669"/>
    <property type="project" value="UniProtKB-UniRule"/>
</dbReference>
<dbReference type="CDD" id="cd03891">
    <property type="entry name" value="M20_DapE_proteobac"/>
    <property type="match status" value="1"/>
</dbReference>
<dbReference type="Gene3D" id="3.40.630.10">
    <property type="entry name" value="Zn peptidases"/>
    <property type="match status" value="2"/>
</dbReference>
<dbReference type="HAMAP" id="MF_01690">
    <property type="entry name" value="DapE"/>
    <property type="match status" value="1"/>
</dbReference>
<dbReference type="InterPro" id="IPR001261">
    <property type="entry name" value="ArgE/DapE_CS"/>
</dbReference>
<dbReference type="InterPro" id="IPR036264">
    <property type="entry name" value="Bact_exopeptidase_dim_dom"/>
</dbReference>
<dbReference type="InterPro" id="IPR005941">
    <property type="entry name" value="DapE_proteobac"/>
</dbReference>
<dbReference type="InterPro" id="IPR002933">
    <property type="entry name" value="Peptidase_M20"/>
</dbReference>
<dbReference type="InterPro" id="IPR011650">
    <property type="entry name" value="Peptidase_M20_dimer"/>
</dbReference>
<dbReference type="InterPro" id="IPR050072">
    <property type="entry name" value="Peptidase_M20A"/>
</dbReference>
<dbReference type="NCBIfam" id="TIGR01246">
    <property type="entry name" value="dapE_proteo"/>
    <property type="match status" value="1"/>
</dbReference>
<dbReference type="NCBIfam" id="NF009557">
    <property type="entry name" value="PRK13009.1"/>
    <property type="match status" value="1"/>
</dbReference>
<dbReference type="PANTHER" id="PTHR43808">
    <property type="entry name" value="ACETYLORNITHINE DEACETYLASE"/>
    <property type="match status" value="1"/>
</dbReference>
<dbReference type="PANTHER" id="PTHR43808:SF31">
    <property type="entry name" value="N-ACETYL-L-CITRULLINE DEACETYLASE"/>
    <property type="match status" value="1"/>
</dbReference>
<dbReference type="Pfam" id="PF07687">
    <property type="entry name" value="M20_dimer"/>
    <property type="match status" value="1"/>
</dbReference>
<dbReference type="Pfam" id="PF01546">
    <property type="entry name" value="Peptidase_M20"/>
    <property type="match status" value="1"/>
</dbReference>
<dbReference type="SUPFAM" id="SSF55031">
    <property type="entry name" value="Bacterial exopeptidase dimerisation domain"/>
    <property type="match status" value="1"/>
</dbReference>
<dbReference type="SUPFAM" id="SSF53187">
    <property type="entry name" value="Zn-dependent exopeptidases"/>
    <property type="match status" value="1"/>
</dbReference>
<dbReference type="PROSITE" id="PS00758">
    <property type="entry name" value="ARGE_DAPE_CPG2_1"/>
    <property type="match status" value="1"/>
</dbReference>
<dbReference type="PROSITE" id="PS00759">
    <property type="entry name" value="ARGE_DAPE_CPG2_2"/>
    <property type="match status" value="1"/>
</dbReference>
<keyword id="KW-0028">Amino-acid biosynthesis</keyword>
<keyword id="KW-0170">Cobalt</keyword>
<keyword id="KW-0220">Diaminopimelate biosynthesis</keyword>
<keyword id="KW-0378">Hydrolase</keyword>
<keyword id="KW-0457">Lysine biosynthesis</keyword>
<keyword id="KW-0479">Metal-binding</keyword>
<keyword id="KW-1185">Reference proteome</keyword>
<keyword id="KW-0862">Zinc</keyword>
<organism>
    <name type="scientific">Blochmanniella floridana</name>
    <dbReference type="NCBI Taxonomy" id="203907"/>
    <lineage>
        <taxon>Bacteria</taxon>
        <taxon>Pseudomonadati</taxon>
        <taxon>Pseudomonadota</taxon>
        <taxon>Gammaproteobacteria</taxon>
        <taxon>Enterobacterales</taxon>
        <taxon>Enterobacteriaceae</taxon>
        <taxon>ant endosymbionts</taxon>
        <taxon>Candidatus Blochmanniella</taxon>
    </lineage>
</organism>
<gene>
    <name evidence="1" type="primary">dapE</name>
    <name type="ordered locus">Bfl517</name>
</gene>
<evidence type="ECO:0000255" key="1">
    <source>
        <dbReference type="HAMAP-Rule" id="MF_01690"/>
    </source>
</evidence>
<sequence length="384" mass="43589">MINDLITLTQQLIRQPSITPNDCNCQKIITDYLKSLQFNIEPMNSSNTSNIWAYRYGYDQKKYTTLLFAGHTDVVPPGDIHNWQYPPFSGTVHNNIIYGRGSSDMKGALAAMLVATKSFIQKYPKHKNRIAFIITSDEEGSGIHGTKKIIKSLIHRHEHINYCIIGEPSSNNKIGDVIKNGRRGSCTGKLVIHGSQGHVAYPQFLKNPIHLAIPILSKLLNTMWDQHKSTLFPDTSIQITHLHTIPINYSTNNITPEQLILNFNFRFNDQSTMHSIHNNINKILSNYHVTYHLHWESKSEPYFSAPGKLVNIIIDIIKKYYNITPQLNTTGGTSDGRFIIQTGAEIIELGALNNTIHKVNECIDLVDLKSLSHIYFKIMEKILL</sequence>
<comment type="function">
    <text evidence="1">Catalyzes the hydrolysis of N-succinyl-L,L-diaminopimelic acid (SDAP), forming succinate and LL-2,6-diaminopimelate (DAP), an intermediate involved in the bacterial biosynthesis of lysine and meso-diaminopimelic acid, an essential component of bacterial cell walls.</text>
</comment>
<comment type="catalytic activity">
    <reaction evidence="1">
        <text>N-succinyl-(2S,6S)-2,6-diaminopimelate + H2O = (2S,6S)-2,6-diaminopimelate + succinate</text>
        <dbReference type="Rhea" id="RHEA:22608"/>
        <dbReference type="ChEBI" id="CHEBI:15377"/>
        <dbReference type="ChEBI" id="CHEBI:30031"/>
        <dbReference type="ChEBI" id="CHEBI:57609"/>
        <dbReference type="ChEBI" id="CHEBI:58087"/>
        <dbReference type="EC" id="3.5.1.18"/>
    </reaction>
</comment>
<comment type="cofactor">
    <cofactor evidence="1">
        <name>Zn(2+)</name>
        <dbReference type="ChEBI" id="CHEBI:29105"/>
    </cofactor>
    <cofactor evidence="1">
        <name>Co(2+)</name>
        <dbReference type="ChEBI" id="CHEBI:48828"/>
    </cofactor>
    <text evidence="1">Binds 2 Zn(2+) or Co(2+) ions per subunit.</text>
</comment>
<comment type="pathway">
    <text evidence="1">Amino-acid biosynthesis; L-lysine biosynthesis via DAP pathway; LL-2,6-diaminopimelate from (S)-tetrahydrodipicolinate (succinylase route): step 3/3.</text>
</comment>
<comment type="subunit">
    <text evidence="1">Homodimer.</text>
</comment>
<comment type="similarity">
    <text evidence="1">Belongs to the peptidase M20A family. DapE subfamily.</text>
</comment>
<reference key="1">
    <citation type="journal article" date="2003" name="Proc. Natl. Acad. Sci. U.S.A.">
        <title>The genome sequence of Blochmannia floridanus: comparative analysis of reduced genomes.</title>
        <authorList>
            <person name="Gil R."/>
            <person name="Silva F.J."/>
            <person name="Zientz E."/>
            <person name="Delmotte F."/>
            <person name="Gonzalez-Candelas F."/>
            <person name="Latorre A."/>
            <person name="Rausell C."/>
            <person name="Kamerbeek J."/>
            <person name="Gadau J."/>
            <person name="Hoelldobler B."/>
            <person name="van Ham R.C.H.J."/>
            <person name="Gross R."/>
            <person name="Moya A."/>
        </authorList>
    </citation>
    <scope>NUCLEOTIDE SEQUENCE [LARGE SCALE GENOMIC DNA]</scope>
</reference>